<protein>
    <recommendedName>
        <fullName evidence="1">Indole-3-glycerol phosphate synthase</fullName>
        <shortName evidence="1">IGPS</shortName>
        <ecNumber evidence="1">4.1.1.48</ecNumber>
    </recommendedName>
</protein>
<evidence type="ECO:0000255" key="1">
    <source>
        <dbReference type="HAMAP-Rule" id="MF_00134"/>
    </source>
</evidence>
<gene>
    <name evidence="1" type="primary">trpC</name>
    <name type="ordered locus">BCE_1359</name>
</gene>
<sequence>MGTILDKIVEQKKKEVATLYETYTPIKESRKTHSLVESLQQFTVIAEVKRASPSKGDINLHVDVRKQVKTYEECGAGAVSVLTDGQFFKGSFYDLQTAREESSIPLLCKDFIIDKIQIDRAYEAGADIILLIVAALPKEKLKELYSYVLEKGLEAIVEIHDEEELEIAIELNPHVIGINNRNLKTFEVDLGQTEKLGKRLNEEKLLWISESGIHSKEDIIRVKRAGAKGVLVGEALMTSSSIRTFFEDCKVNI</sequence>
<accession>Q73BQ9</accession>
<keyword id="KW-0028">Amino-acid biosynthesis</keyword>
<keyword id="KW-0057">Aromatic amino acid biosynthesis</keyword>
<keyword id="KW-0210">Decarboxylase</keyword>
<keyword id="KW-0456">Lyase</keyword>
<keyword id="KW-0822">Tryptophan biosynthesis</keyword>
<feature type="chain" id="PRO_1000018437" description="Indole-3-glycerol phosphate synthase">
    <location>
        <begin position="1"/>
        <end position="253"/>
    </location>
</feature>
<reference key="1">
    <citation type="journal article" date="2004" name="Nucleic Acids Res.">
        <title>The genome sequence of Bacillus cereus ATCC 10987 reveals metabolic adaptations and a large plasmid related to Bacillus anthracis pXO1.</title>
        <authorList>
            <person name="Rasko D.A."/>
            <person name="Ravel J."/>
            <person name="Oekstad O.A."/>
            <person name="Helgason E."/>
            <person name="Cer R.Z."/>
            <person name="Jiang L."/>
            <person name="Shores K.A."/>
            <person name="Fouts D.E."/>
            <person name="Tourasse N.J."/>
            <person name="Angiuoli S.V."/>
            <person name="Kolonay J.F."/>
            <person name="Nelson W.C."/>
            <person name="Kolstoe A.-B."/>
            <person name="Fraser C.M."/>
            <person name="Read T.D."/>
        </authorList>
    </citation>
    <scope>NUCLEOTIDE SEQUENCE [LARGE SCALE GENOMIC DNA]</scope>
    <source>
        <strain>ATCC 10987 / NRS 248</strain>
    </source>
</reference>
<proteinExistence type="inferred from homology"/>
<dbReference type="EC" id="4.1.1.48" evidence="1"/>
<dbReference type="EMBL" id="AE017194">
    <property type="protein sequence ID" value="AAS40288.1"/>
    <property type="molecule type" value="Genomic_DNA"/>
</dbReference>
<dbReference type="SMR" id="Q73BQ9"/>
<dbReference type="KEGG" id="bca:BCE_1359"/>
<dbReference type="HOGENOM" id="CLU_034247_2_0_9"/>
<dbReference type="UniPathway" id="UPA00035">
    <property type="reaction ID" value="UER00043"/>
</dbReference>
<dbReference type="Proteomes" id="UP000002527">
    <property type="component" value="Chromosome"/>
</dbReference>
<dbReference type="GO" id="GO:0004425">
    <property type="term" value="F:indole-3-glycerol-phosphate synthase activity"/>
    <property type="evidence" value="ECO:0007669"/>
    <property type="project" value="UniProtKB-UniRule"/>
</dbReference>
<dbReference type="GO" id="GO:0004640">
    <property type="term" value="F:phosphoribosylanthranilate isomerase activity"/>
    <property type="evidence" value="ECO:0007669"/>
    <property type="project" value="TreeGrafter"/>
</dbReference>
<dbReference type="GO" id="GO:0000162">
    <property type="term" value="P:L-tryptophan biosynthetic process"/>
    <property type="evidence" value="ECO:0007669"/>
    <property type="project" value="UniProtKB-UniRule"/>
</dbReference>
<dbReference type="CDD" id="cd00331">
    <property type="entry name" value="IGPS"/>
    <property type="match status" value="1"/>
</dbReference>
<dbReference type="FunFam" id="3.20.20.70:FF:000024">
    <property type="entry name" value="Indole-3-glycerol phosphate synthase"/>
    <property type="match status" value="1"/>
</dbReference>
<dbReference type="Gene3D" id="3.20.20.70">
    <property type="entry name" value="Aldolase class I"/>
    <property type="match status" value="1"/>
</dbReference>
<dbReference type="HAMAP" id="MF_00134_B">
    <property type="entry name" value="IGPS_B"/>
    <property type="match status" value="1"/>
</dbReference>
<dbReference type="InterPro" id="IPR013785">
    <property type="entry name" value="Aldolase_TIM"/>
</dbReference>
<dbReference type="InterPro" id="IPR045186">
    <property type="entry name" value="Indole-3-glycerol_P_synth"/>
</dbReference>
<dbReference type="InterPro" id="IPR013798">
    <property type="entry name" value="Indole-3-glycerol_P_synth_dom"/>
</dbReference>
<dbReference type="InterPro" id="IPR001468">
    <property type="entry name" value="Indole-3-GlycerolPSynthase_CS"/>
</dbReference>
<dbReference type="InterPro" id="IPR011060">
    <property type="entry name" value="RibuloseP-bd_barrel"/>
</dbReference>
<dbReference type="NCBIfam" id="NF001371">
    <property type="entry name" value="PRK00278.1-3"/>
    <property type="match status" value="1"/>
</dbReference>
<dbReference type="NCBIfam" id="NF001377">
    <property type="entry name" value="PRK00278.2-4"/>
    <property type="match status" value="1"/>
</dbReference>
<dbReference type="PANTHER" id="PTHR22854:SF2">
    <property type="entry name" value="INDOLE-3-GLYCEROL-PHOSPHATE SYNTHASE"/>
    <property type="match status" value="1"/>
</dbReference>
<dbReference type="PANTHER" id="PTHR22854">
    <property type="entry name" value="TRYPTOPHAN BIOSYNTHESIS PROTEIN"/>
    <property type="match status" value="1"/>
</dbReference>
<dbReference type="Pfam" id="PF00218">
    <property type="entry name" value="IGPS"/>
    <property type="match status" value="1"/>
</dbReference>
<dbReference type="SUPFAM" id="SSF51366">
    <property type="entry name" value="Ribulose-phoshate binding barrel"/>
    <property type="match status" value="1"/>
</dbReference>
<dbReference type="PROSITE" id="PS00614">
    <property type="entry name" value="IGPS"/>
    <property type="match status" value="1"/>
</dbReference>
<name>TRPC_BACC1</name>
<comment type="catalytic activity">
    <reaction evidence="1">
        <text>1-(2-carboxyphenylamino)-1-deoxy-D-ribulose 5-phosphate + H(+) = (1S,2R)-1-C-(indol-3-yl)glycerol 3-phosphate + CO2 + H2O</text>
        <dbReference type="Rhea" id="RHEA:23476"/>
        <dbReference type="ChEBI" id="CHEBI:15377"/>
        <dbReference type="ChEBI" id="CHEBI:15378"/>
        <dbReference type="ChEBI" id="CHEBI:16526"/>
        <dbReference type="ChEBI" id="CHEBI:58613"/>
        <dbReference type="ChEBI" id="CHEBI:58866"/>
        <dbReference type="EC" id="4.1.1.48"/>
    </reaction>
</comment>
<comment type="pathway">
    <text evidence="1">Amino-acid biosynthesis; L-tryptophan biosynthesis; L-tryptophan from chorismate: step 4/5.</text>
</comment>
<comment type="similarity">
    <text evidence="1">Belongs to the TrpC family.</text>
</comment>
<organism>
    <name type="scientific">Bacillus cereus (strain ATCC 10987 / NRS 248)</name>
    <dbReference type="NCBI Taxonomy" id="222523"/>
    <lineage>
        <taxon>Bacteria</taxon>
        <taxon>Bacillati</taxon>
        <taxon>Bacillota</taxon>
        <taxon>Bacilli</taxon>
        <taxon>Bacillales</taxon>
        <taxon>Bacillaceae</taxon>
        <taxon>Bacillus</taxon>
        <taxon>Bacillus cereus group</taxon>
    </lineage>
</organism>